<organism>
    <name type="scientific">Hylobates lar</name>
    <name type="common">Lar gibbon</name>
    <name type="synonym">White-handed gibbon</name>
    <dbReference type="NCBI Taxonomy" id="9580"/>
    <lineage>
        <taxon>Eukaryota</taxon>
        <taxon>Metazoa</taxon>
        <taxon>Chordata</taxon>
        <taxon>Craniata</taxon>
        <taxon>Vertebrata</taxon>
        <taxon>Euteleostomi</taxon>
        <taxon>Mammalia</taxon>
        <taxon>Eutheria</taxon>
        <taxon>Euarchontoglires</taxon>
        <taxon>Primates</taxon>
        <taxon>Haplorrhini</taxon>
        <taxon>Catarrhini</taxon>
        <taxon>Hylobatidae</taxon>
        <taxon>Hylobates</taxon>
    </lineage>
</organism>
<gene>
    <name type="primary">CLEC4M</name>
    <name type="synonym">CD209L1</name>
</gene>
<accession>Q8HY12</accession>
<feature type="chain" id="PRO_0000046628" description="C-type lectin domain family 4 member M">
    <location>
        <begin position="1"/>
        <end position="399"/>
    </location>
</feature>
<feature type="topological domain" description="Cytoplasmic" evidence="2">
    <location>
        <begin position="1"/>
        <end position="49"/>
    </location>
</feature>
<feature type="transmembrane region" description="Helical; Signal-anchor for type II membrane protein" evidence="2">
    <location>
        <begin position="50"/>
        <end position="70"/>
    </location>
</feature>
<feature type="topological domain" description="Extracellular" evidence="2">
    <location>
        <begin position="71"/>
        <end position="399"/>
    </location>
</feature>
<feature type="repeat" description="1">
    <location>
        <begin position="108"/>
        <end position="130"/>
    </location>
</feature>
<feature type="repeat" description="2">
    <location>
        <begin position="131"/>
        <end position="153"/>
    </location>
</feature>
<feature type="repeat" description="3">
    <location>
        <begin position="154"/>
        <end position="176"/>
    </location>
</feature>
<feature type="repeat" description="4">
    <location>
        <begin position="177"/>
        <end position="199"/>
    </location>
</feature>
<feature type="repeat" description="5">
    <location>
        <begin position="200"/>
        <end position="222"/>
    </location>
</feature>
<feature type="repeat" description="6">
    <location>
        <begin position="223"/>
        <end position="245"/>
    </location>
</feature>
<feature type="repeat" description="7">
    <location>
        <begin position="246"/>
        <end position="268"/>
    </location>
</feature>
<feature type="domain" description="C-type lectin" evidence="3">
    <location>
        <begin position="274"/>
        <end position="390"/>
    </location>
</feature>
<feature type="region of interest" description="7 X approximate tandem repeats">
    <location>
        <begin position="108"/>
        <end position="269"/>
    </location>
</feature>
<feature type="short sequence motif" description="Endocytosis signal" evidence="1">
    <location>
        <begin position="14"/>
        <end position="15"/>
    </location>
</feature>
<feature type="binding site" evidence="1">
    <location>
        <position position="359"/>
    </location>
    <ligand>
        <name>Ca(2+)</name>
        <dbReference type="ChEBI" id="CHEBI:29108"/>
    </ligand>
</feature>
<feature type="binding site" evidence="1">
    <location>
        <position position="361"/>
    </location>
    <ligand>
        <name>Ca(2+)</name>
        <dbReference type="ChEBI" id="CHEBI:29108"/>
    </ligand>
</feature>
<feature type="binding site" evidence="1">
    <location>
        <position position="363"/>
    </location>
    <ligand>
        <name>Ca(2+)</name>
        <dbReference type="ChEBI" id="CHEBI:29108"/>
    </ligand>
</feature>
<feature type="binding site" evidence="1">
    <location>
        <position position="366"/>
    </location>
    <ligand>
        <name>Ca(2+)</name>
        <dbReference type="ChEBI" id="CHEBI:29108"/>
    </ligand>
</feature>
<feature type="binding site" evidence="1">
    <location>
        <position position="377"/>
    </location>
    <ligand>
        <name>Ca(2+)</name>
        <dbReference type="ChEBI" id="CHEBI:29108"/>
    </ligand>
</feature>
<feature type="binding site" evidence="1">
    <location>
        <position position="378"/>
    </location>
    <ligand>
        <name>Ca(2+)</name>
        <dbReference type="ChEBI" id="CHEBI:29108"/>
    </ligand>
</feature>
<feature type="glycosylation site" description="N-linked (GlcNAc...) asparagine" evidence="2">
    <location>
        <position position="92"/>
    </location>
</feature>
<feature type="glycosylation site" description="N-linked (GlcNAc...) asparagine" evidence="2">
    <location>
        <position position="361"/>
    </location>
</feature>
<feature type="disulfide bond" evidence="3">
    <location>
        <begin position="265"/>
        <end position="395"/>
    </location>
</feature>
<feature type="disulfide bond" evidence="3">
    <location>
        <begin position="268"/>
        <end position="279"/>
    </location>
</feature>
<feature type="disulfide bond" evidence="3">
    <location>
        <begin position="296"/>
        <end position="389"/>
    </location>
</feature>
<feature type="disulfide bond" evidence="3">
    <location>
        <begin position="368"/>
        <end position="381"/>
    </location>
</feature>
<keyword id="KW-1064">Adaptive immunity</keyword>
<keyword id="KW-0106">Calcium</keyword>
<keyword id="KW-1015">Disulfide bond</keyword>
<keyword id="KW-0254">Endocytosis</keyword>
<keyword id="KW-0325">Glycoprotein</keyword>
<keyword id="KW-0391">Immunity</keyword>
<keyword id="KW-0399">Innate immunity</keyword>
<keyword id="KW-0430">Lectin</keyword>
<keyword id="KW-0465">Mannose-binding</keyword>
<keyword id="KW-0472">Membrane</keyword>
<keyword id="KW-0479">Metal-binding</keyword>
<keyword id="KW-0675">Receptor</keyword>
<keyword id="KW-0677">Repeat</keyword>
<keyword id="KW-0735">Signal-anchor</keyword>
<keyword id="KW-0812">Transmembrane</keyword>
<keyword id="KW-1133">Transmembrane helix</keyword>
<protein>
    <recommendedName>
        <fullName>C-type lectin domain family 4 member M</fullName>
    </recommendedName>
    <alternativeName>
        <fullName>CD209 antigen-like protein 1</fullName>
    </alternativeName>
    <cdAntigenName>CD299</cdAntigenName>
</protein>
<evidence type="ECO:0000250" key="1"/>
<evidence type="ECO:0000255" key="2"/>
<evidence type="ECO:0000255" key="3">
    <source>
        <dbReference type="PROSITE-ProRule" id="PRU00040"/>
    </source>
</evidence>
<proteinExistence type="inferred from homology"/>
<name>CLC4M_HYLLA</name>
<dbReference type="EMBL" id="AY078813">
    <property type="protein sequence ID" value="AAL89528.1"/>
    <property type="molecule type" value="Genomic_DNA"/>
</dbReference>
<dbReference type="EMBL" id="AY078807">
    <property type="protein sequence ID" value="AAL89528.1"/>
    <property type="status" value="JOINED"/>
    <property type="molecule type" value="Genomic_DNA"/>
</dbReference>
<dbReference type="EMBL" id="AY078808">
    <property type="protein sequence ID" value="AAL89528.1"/>
    <property type="status" value="JOINED"/>
    <property type="molecule type" value="Genomic_DNA"/>
</dbReference>
<dbReference type="EMBL" id="AY078809">
    <property type="protein sequence ID" value="AAL89528.1"/>
    <property type="status" value="JOINED"/>
    <property type="molecule type" value="Genomic_DNA"/>
</dbReference>
<dbReference type="EMBL" id="AY078810">
    <property type="protein sequence ID" value="AAL89528.1"/>
    <property type="status" value="JOINED"/>
    <property type="molecule type" value="Genomic_DNA"/>
</dbReference>
<dbReference type="EMBL" id="AY078811">
    <property type="protein sequence ID" value="AAL89528.1"/>
    <property type="status" value="JOINED"/>
    <property type="molecule type" value="Genomic_DNA"/>
</dbReference>
<dbReference type="EMBL" id="AY078812">
    <property type="protein sequence ID" value="AAL89528.1"/>
    <property type="status" value="JOINED"/>
    <property type="molecule type" value="Genomic_DNA"/>
</dbReference>
<dbReference type="SMR" id="Q8HY12"/>
<dbReference type="GlyCosmos" id="Q8HY12">
    <property type="glycosylation" value="2 sites, No reported glycans"/>
</dbReference>
<dbReference type="GO" id="GO:0016020">
    <property type="term" value="C:membrane"/>
    <property type="evidence" value="ECO:0007669"/>
    <property type="project" value="UniProtKB-SubCell"/>
</dbReference>
<dbReference type="GO" id="GO:0005537">
    <property type="term" value="F:D-mannose binding"/>
    <property type="evidence" value="ECO:0007669"/>
    <property type="project" value="UniProtKB-KW"/>
</dbReference>
<dbReference type="GO" id="GO:0046872">
    <property type="term" value="F:metal ion binding"/>
    <property type="evidence" value="ECO:0007669"/>
    <property type="project" value="UniProtKB-KW"/>
</dbReference>
<dbReference type="GO" id="GO:0002250">
    <property type="term" value="P:adaptive immune response"/>
    <property type="evidence" value="ECO:0007669"/>
    <property type="project" value="UniProtKB-KW"/>
</dbReference>
<dbReference type="GO" id="GO:0006897">
    <property type="term" value="P:endocytosis"/>
    <property type="evidence" value="ECO:0007669"/>
    <property type="project" value="UniProtKB-KW"/>
</dbReference>
<dbReference type="GO" id="GO:0045087">
    <property type="term" value="P:innate immune response"/>
    <property type="evidence" value="ECO:0007669"/>
    <property type="project" value="UniProtKB-KW"/>
</dbReference>
<dbReference type="CDD" id="cd03590">
    <property type="entry name" value="CLECT_DC-SIGN_like"/>
    <property type="match status" value="1"/>
</dbReference>
<dbReference type="FunFam" id="3.10.100.10:FF:000044">
    <property type="entry name" value="CD209 antigen, isoform CRA_b"/>
    <property type="match status" value="1"/>
</dbReference>
<dbReference type="Gene3D" id="3.10.100.10">
    <property type="entry name" value="Mannose-Binding Protein A, subunit A"/>
    <property type="match status" value="1"/>
</dbReference>
<dbReference type="InterPro" id="IPR001304">
    <property type="entry name" value="C-type_lectin-like"/>
</dbReference>
<dbReference type="InterPro" id="IPR016186">
    <property type="entry name" value="C-type_lectin-like/link_sf"/>
</dbReference>
<dbReference type="InterPro" id="IPR050111">
    <property type="entry name" value="C-type_lectin/snaclec_domain"/>
</dbReference>
<dbReference type="InterPro" id="IPR018378">
    <property type="entry name" value="C-type_lectin_CS"/>
</dbReference>
<dbReference type="InterPro" id="IPR033989">
    <property type="entry name" value="CD209-like_CTLD"/>
</dbReference>
<dbReference type="InterPro" id="IPR016187">
    <property type="entry name" value="CTDL_fold"/>
</dbReference>
<dbReference type="PANTHER" id="PTHR22803">
    <property type="entry name" value="MANNOSE, PHOSPHOLIPASE, LECTIN RECEPTOR RELATED"/>
    <property type="match status" value="1"/>
</dbReference>
<dbReference type="Pfam" id="PF00059">
    <property type="entry name" value="Lectin_C"/>
    <property type="match status" value="1"/>
</dbReference>
<dbReference type="SMART" id="SM00034">
    <property type="entry name" value="CLECT"/>
    <property type="match status" value="1"/>
</dbReference>
<dbReference type="SUPFAM" id="SSF56436">
    <property type="entry name" value="C-type lectin-like"/>
    <property type="match status" value="1"/>
</dbReference>
<dbReference type="PROSITE" id="PS00615">
    <property type="entry name" value="C_TYPE_LECTIN_1"/>
    <property type="match status" value="1"/>
</dbReference>
<dbReference type="PROSITE" id="PS50041">
    <property type="entry name" value="C_TYPE_LECTIN_2"/>
    <property type="match status" value="1"/>
</dbReference>
<reference key="1">
    <citation type="journal article" date="2003" name="J. Virol.">
        <title>Novel member of the CD209 (DC-SIGN) gene family in primates.</title>
        <authorList>
            <person name="Bashirova A.A."/>
            <person name="Wu L."/>
            <person name="Cheng J."/>
            <person name="Martin T.D."/>
            <person name="Martin M.P."/>
            <person name="Benveniste R.E."/>
            <person name="Lifson J.D."/>
            <person name="Kewalramani V.N."/>
            <person name="Hughes A."/>
            <person name="Carrington M."/>
        </authorList>
    </citation>
    <scope>NUCLEOTIDE SEQUENCE [GENOMIC DNA]</scope>
    <source>
        <strain>Isolate B23</strain>
    </source>
</reference>
<comment type="function">
    <text evidence="1">Probable pathogen-recognition receptor involved in peripheral immune surveillance in liver. May mediate the endocytosis of pathogens which are subsequently degraded in lysosomal compartments. Probably recognizes in a calcium-dependent manner high mannose N-linked oligosaccharides in a variety of pathogen antigens. Is a receptor for ICAM3, probably by binding to mannose-like carbohydrates (By similarity).</text>
</comment>
<comment type="subunit">
    <text evidence="1">Homotetramer.</text>
</comment>
<comment type="subcellular location">
    <subcellularLocation>
        <location evidence="1">Membrane</location>
        <topology evidence="1">Single-pass type II membrane protein</topology>
    </subcellularLocation>
</comment>
<comment type="domain">
    <text evidence="1">The tandem repeat domain, also called neck domain, mediates oligomerization.</text>
</comment>
<sequence length="399" mass="45404">MSDSKEQRVQPLGLLEEDPTTSGIRLFPRDFQFQQTHGHKSSTGCLGHGPLVLQLLSFTLLAGVLVAILVQVYKVPSSLSQEQSEQDVIYQNLTQLKAAVGELSEKSKLQEIYQELIQLKAAVGELPEKSTLQEIYQELTRLKAAVGELPEKSRLQEIYQELTRLKAAVGELPEKSKQQEIYQELTRLKAAVGELPEKSKQQEIYQELTRLKAAVGELPEKSKQQEIYQELTRLKAAVGELPDQSKQQQIYQELTDLKTAFERLCCRCPKDWTFFQGNCYFISNSQRNWHDSVTACREVGAQLVVIKSAEEQNFLQLQSSRSNRFAWMGLSDLNQEGTWQWVDGSPLSSSFQRYWNSGEPNNSGDEDCAEFSGSGWNDNRCNVDNYWICKKPTACFRDE</sequence>